<gene>
    <name evidence="1" type="primary">rplU</name>
    <name type="ordered locus">BPUM_2436</name>
</gene>
<sequence>MYAIIETGGKQVKVEEGQTVYIEKLAAEAGETVTFENVLFVGGDTVKVGNPSVAGATVTAKVEKQGRGKKITVFKYKPKKNNHKKQGHRQPYTKVVIEKINA</sequence>
<protein>
    <recommendedName>
        <fullName evidence="1">Large ribosomal subunit protein bL21</fullName>
    </recommendedName>
    <alternativeName>
        <fullName evidence="2">50S ribosomal protein L21</fullName>
    </alternativeName>
</protein>
<dbReference type="EMBL" id="CP000813">
    <property type="protein sequence ID" value="ABV63099.1"/>
    <property type="molecule type" value="Genomic_DNA"/>
</dbReference>
<dbReference type="RefSeq" id="WP_012010760.1">
    <property type="nucleotide sequence ID" value="NZ_VEIS01000010.1"/>
</dbReference>
<dbReference type="SMR" id="A8FFT2"/>
<dbReference type="STRING" id="315750.BPUM_2436"/>
<dbReference type="GeneID" id="5621700"/>
<dbReference type="KEGG" id="bpu:BPUM_2436"/>
<dbReference type="eggNOG" id="COG0261">
    <property type="taxonomic scope" value="Bacteria"/>
</dbReference>
<dbReference type="HOGENOM" id="CLU_061463_3_2_9"/>
<dbReference type="OrthoDB" id="9813334at2"/>
<dbReference type="Proteomes" id="UP000001355">
    <property type="component" value="Chromosome"/>
</dbReference>
<dbReference type="GO" id="GO:0005737">
    <property type="term" value="C:cytoplasm"/>
    <property type="evidence" value="ECO:0007669"/>
    <property type="project" value="UniProtKB-ARBA"/>
</dbReference>
<dbReference type="GO" id="GO:1990904">
    <property type="term" value="C:ribonucleoprotein complex"/>
    <property type="evidence" value="ECO:0007669"/>
    <property type="project" value="UniProtKB-KW"/>
</dbReference>
<dbReference type="GO" id="GO:0005840">
    <property type="term" value="C:ribosome"/>
    <property type="evidence" value="ECO:0007669"/>
    <property type="project" value="UniProtKB-KW"/>
</dbReference>
<dbReference type="GO" id="GO:0019843">
    <property type="term" value="F:rRNA binding"/>
    <property type="evidence" value="ECO:0007669"/>
    <property type="project" value="UniProtKB-UniRule"/>
</dbReference>
<dbReference type="GO" id="GO:0003735">
    <property type="term" value="F:structural constituent of ribosome"/>
    <property type="evidence" value="ECO:0007669"/>
    <property type="project" value="InterPro"/>
</dbReference>
<dbReference type="GO" id="GO:0006412">
    <property type="term" value="P:translation"/>
    <property type="evidence" value="ECO:0007669"/>
    <property type="project" value="UniProtKB-UniRule"/>
</dbReference>
<dbReference type="HAMAP" id="MF_01363">
    <property type="entry name" value="Ribosomal_bL21"/>
    <property type="match status" value="1"/>
</dbReference>
<dbReference type="InterPro" id="IPR028909">
    <property type="entry name" value="bL21-like"/>
</dbReference>
<dbReference type="InterPro" id="IPR036164">
    <property type="entry name" value="bL21-like_sf"/>
</dbReference>
<dbReference type="InterPro" id="IPR001787">
    <property type="entry name" value="Ribosomal_bL21"/>
</dbReference>
<dbReference type="InterPro" id="IPR018258">
    <property type="entry name" value="Ribosomal_bL21_CS"/>
</dbReference>
<dbReference type="NCBIfam" id="TIGR00061">
    <property type="entry name" value="L21"/>
    <property type="match status" value="1"/>
</dbReference>
<dbReference type="PANTHER" id="PTHR21349">
    <property type="entry name" value="50S RIBOSOMAL PROTEIN L21"/>
    <property type="match status" value="1"/>
</dbReference>
<dbReference type="PANTHER" id="PTHR21349:SF0">
    <property type="entry name" value="LARGE RIBOSOMAL SUBUNIT PROTEIN BL21M"/>
    <property type="match status" value="1"/>
</dbReference>
<dbReference type="Pfam" id="PF00829">
    <property type="entry name" value="Ribosomal_L21p"/>
    <property type="match status" value="1"/>
</dbReference>
<dbReference type="SUPFAM" id="SSF141091">
    <property type="entry name" value="L21p-like"/>
    <property type="match status" value="1"/>
</dbReference>
<dbReference type="PROSITE" id="PS01169">
    <property type="entry name" value="RIBOSOMAL_L21"/>
    <property type="match status" value="1"/>
</dbReference>
<reference key="1">
    <citation type="journal article" date="2007" name="PLoS ONE">
        <title>Paradoxical DNA repair and peroxide resistance gene conservation in Bacillus pumilus SAFR-032.</title>
        <authorList>
            <person name="Gioia J."/>
            <person name="Yerrapragada S."/>
            <person name="Qin X."/>
            <person name="Jiang H."/>
            <person name="Igboeli O.C."/>
            <person name="Muzny D."/>
            <person name="Dugan-Rocha S."/>
            <person name="Ding Y."/>
            <person name="Hawes A."/>
            <person name="Liu W."/>
            <person name="Perez L."/>
            <person name="Kovar C."/>
            <person name="Dinh H."/>
            <person name="Lee S."/>
            <person name="Nazareth L."/>
            <person name="Blyth P."/>
            <person name="Holder M."/>
            <person name="Buhay C."/>
            <person name="Tirumalai M.R."/>
            <person name="Liu Y."/>
            <person name="Dasgupta I."/>
            <person name="Bokhetache L."/>
            <person name="Fujita M."/>
            <person name="Karouia F."/>
            <person name="Eswara Moorthy P."/>
            <person name="Siefert J."/>
            <person name="Uzman A."/>
            <person name="Buzumbo P."/>
            <person name="Verma A."/>
            <person name="Zwiya H."/>
            <person name="McWilliams B.D."/>
            <person name="Olowu A."/>
            <person name="Clinkenbeard K.D."/>
            <person name="Newcombe D."/>
            <person name="Golebiewski L."/>
            <person name="Petrosino J.F."/>
            <person name="Nicholson W.L."/>
            <person name="Fox G.E."/>
            <person name="Venkateswaran K."/>
            <person name="Highlander S.K."/>
            <person name="Weinstock G.M."/>
        </authorList>
    </citation>
    <scope>NUCLEOTIDE SEQUENCE [LARGE SCALE GENOMIC DNA]</scope>
    <source>
        <strain>SAFR-032</strain>
    </source>
</reference>
<comment type="function">
    <text evidence="1">This protein binds to 23S rRNA in the presence of protein L20.</text>
</comment>
<comment type="subunit">
    <text evidence="1">Part of the 50S ribosomal subunit. Contacts protein L20.</text>
</comment>
<comment type="similarity">
    <text evidence="1">Belongs to the bacterial ribosomal protein bL21 family.</text>
</comment>
<organism>
    <name type="scientific">Bacillus pumilus (strain SAFR-032)</name>
    <dbReference type="NCBI Taxonomy" id="315750"/>
    <lineage>
        <taxon>Bacteria</taxon>
        <taxon>Bacillati</taxon>
        <taxon>Bacillota</taxon>
        <taxon>Bacilli</taxon>
        <taxon>Bacillales</taxon>
        <taxon>Bacillaceae</taxon>
        <taxon>Bacillus</taxon>
    </lineage>
</organism>
<feature type="chain" id="PRO_1000067804" description="Large ribosomal subunit protein bL21">
    <location>
        <begin position="1"/>
        <end position="102"/>
    </location>
</feature>
<proteinExistence type="inferred from homology"/>
<keyword id="KW-0687">Ribonucleoprotein</keyword>
<keyword id="KW-0689">Ribosomal protein</keyword>
<keyword id="KW-0694">RNA-binding</keyword>
<keyword id="KW-0699">rRNA-binding</keyword>
<name>RL21_BACP2</name>
<accession>A8FFT2</accession>
<evidence type="ECO:0000255" key="1">
    <source>
        <dbReference type="HAMAP-Rule" id="MF_01363"/>
    </source>
</evidence>
<evidence type="ECO:0000305" key="2"/>